<protein>
    <recommendedName>
        <fullName evidence="1">RNA-directed RNA polymerase catalytic subunit</fullName>
        <ecNumber evidence="1">2.7.7.48</ecNumber>
    </recommendedName>
    <alternativeName>
        <fullName evidence="1">Polymerase basic protein 1</fullName>
        <shortName evidence="1">PB1</shortName>
    </alternativeName>
    <alternativeName>
        <fullName evidence="1">RNA-directed RNA polymerase subunit P1</fullName>
    </alternativeName>
</protein>
<sequence length="757" mass="86451">MDVNPTLLFLKVPAQNAISTTFPYTGDPPYSHGTGTGYTMDTVNRTHQYSERGKWTTNTETGAPQLNPIDGPLPEDNEPSGYAQTDCVLEAMAFLEESHPGIFENSCLETMEVVQQTRVDKLTQGRQTYDWTLNRNQPAATALANTIEVFRSNGLTANESGRLIDFLKDVMESMDKEEMEITTHFQRKRRVRDNMTKRMVTQRTIGKKKQRLNKRSYLIRALTLNTMTKDAERGKLKRRAIATPGMQIRGFVYFVEALARSICEKLEQSGLPVGGNEKKAKLANVVRKMMTNSQDTELSFTITGDNTKWNENQNPRMFLAMITYITRNQPKWFRNVLSIAPIMFSNKMARLGKGYMFESKSMKLRTQIPAEMLATIDLKYFNDSTRKKIEKIRPLLIDGTASLSPGMMMGMFNMLSTVLGVSILNLGQKRYTKTTYWWDGLQSSDDFALIVNAPNHEGIQAGVDRFYRTCKLVGINMSKKKSYINRTGTFEFTSFFYRYGFVANFSMELPSFGVSGINESADMSIGVTVIKNNMINNDLGPATAQMALQLFIKDYRYTYRCHRGDTQIQTRRSFEIKKLWEQTRSKAGLLVSDGGPNLYNIRNLHIPEVCLKWELMDEDYQGRLCNPLNPFVSHKEIESVNNAVVMPAHGPAKSMEYDAVATTHSWIPKRNRSILNTSQRGILEDEQMYQKCCNLFEKFFPSSSYRRPVGISSMVEAMVSRARIDARIDFESGRIKKEEFAEIMKICSTIEELRRQK</sequence>
<gene>
    <name evidence="1" type="primary">PB1</name>
</gene>
<name>RDRP_I83A6</name>
<comment type="function">
    <text evidence="1">RNA-dependent RNA polymerase which is responsible for replication and transcription of virus RNA segments. The transcription of viral mRNAs occurs by a unique mechanism called cap-snatching. 5' methylated caps of cellular mRNAs are cleaved after 10-13 nucleotides by PA. In turn, these short capped RNAs are used as primers by PB1 for transcription of viral mRNAs. During virus replication, PB1 initiates RNA synthesis and copy vRNA into complementary RNA (cRNA) which in turn serves as a template for the production of more vRNAs.</text>
</comment>
<comment type="catalytic activity">
    <reaction evidence="1">
        <text>RNA(n) + a ribonucleoside 5'-triphosphate = RNA(n+1) + diphosphate</text>
        <dbReference type="Rhea" id="RHEA:21248"/>
        <dbReference type="Rhea" id="RHEA-COMP:14527"/>
        <dbReference type="Rhea" id="RHEA-COMP:17342"/>
        <dbReference type="ChEBI" id="CHEBI:33019"/>
        <dbReference type="ChEBI" id="CHEBI:61557"/>
        <dbReference type="ChEBI" id="CHEBI:140395"/>
        <dbReference type="EC" id="2.7.7.48"/>
    </reaction>
</comment>
<comment type="subunit">
    <text evidence="1">Influenza RNA polymerase is composed of three subunits: PB1, PB2 and PA. Interacts (via N-terminus) with PA (via C-terminus). Interacts (via C-terminus) with PB2 (via N-terminus); this interaction is essential for transcription initiation.</text>
</comment>
<comment type="subcellular location">
    <subcellularLocation>
        <location evidence="1">Host nucleus</location>
    </subcellularLocation>
    <subcellularLocation>
        <location evidence="1">Host cytoplasm</location>
    </subcellularLocation>
</comment>
<comment type="PTM">
    <text evidence="1">Phosphorylated by host PRKCA.</text>
</comment>
<comment type="similarity">
    <text evidence="1">Belongs to the influenza viruses polymerase PB1 family.</text>
</comment>
<reference key="1">
    <citation type="journal article" date="2006" name="Science">
        <title>Large-scale sequence analysis of avian influenza isolates.</title>
        <authorList>
            <person name="Obenauer J.C."/>
            <person name="Denson J."/>
            <person name="Mehta P.K."/>
            <person name="Su X."/>
            <person name="Mukatira S."/>
            <person name="Finkelstein D.B."/>
            <person name="Xu X."/>
            <person name="Wang J."/>
            <person name="Ma J."/>
            <person name="Fan Y."/>
            <person name="Rakestraw K.M."/>
            <person name="Webster R.G."/>
            <person name="Hoffmann E."/>
            <person name="Krauss S."/>
            <person name="Zheng J."/>
            <person name="Zhang Z."/>
            <person name="Naeve C.W."/>
        </authorList>
    </citation>
    <scope>NUCLEOTIDE SEQUENCE [GENOMIC RNA]</scope>
</reference>
<accession>Q0A2D0</accession>
<organismHost>
    <name type="scientific">Aves</name>
    <dbReference type="NCBI Taxonomy" id="8782"/>
</organismHost>
<feature type="chain" id="PRO_0000279589" description="RNA-directed RNA polymerase catalytic subunit">
    <location>
        <begin position="1"/>
        <end position="757"/>
    </location>
</feature>
<feature type="domain" description="RdRp catalytic" evidence="1">
    <location>
        <begin position="286"/>
        <end position="483"/>
    </location>
</feature>
<feature type="region of interest" description="Disordered" evidence="2">
    <location>
        <begin position="52"/>
        <end position="82"/>
    </location>
</feature>
<feature type="region of interest" description="Promoter-binding site" evidence="1">
    <location>
        <begin position="249"/>
        <end position="256"/>
    </location>
</feature>
<feature type="short sequence motif" description="Nuclear localization signal" evidence="1">
    <location>
        <begin position="187"/>
        <end position="195"/>
    </location>
</feature>
<feature type="short sequence motif" description="Nuclear localization signal" evidence="1">
    <location>
        <begin position="203"/>
        <end position="216"/>
    </location>
</feature>
<feature type="compositionally biased region" description="Polar residues" evidence="2">
    <location>
        <begin position="55"/>
        <end position="64"/>
    </location>
</feature>
<organism>
    <name type="scientific">Influenza A virus (strain A/Chicken/Pennsylvania/1370/1983 H5N2)</name>
    <dbReference type="NCBI Taxonomy" id="385617"/>
    <lineage>
        <taxon>Viruses</taxon>
        <taxon>Riboviria</taxon>
        <taxon>Orthornavirae</taxon>
        <taxon>Negarnaviricota</taxon>
        <taxon>Polyploviricotina</taxon>
        <taxon>Insthoviricetes</taxon>
        <taxon>Articulavirales</taxon>
        <taxon>Orthomyxoviridae</taxon>
        <taxon>Alphainfluenzavirus</taxon>
        <taxon>Alphainfluenzavirus influenzae</taxon>
        <taxon>Influenza A virus</taxon>
    </lineage>
</organism>
<keyword id="KW-1262">Eukaryotic host gene expression shutoff by virus</keyword>
<keyword id="KW-1191">Eukaryotic host transcription shutoff by virus</keyword>
<keyword id="KW-1035">Host cytoplasm</keyword>
<keyword id="KW-1190">Host gene expression shutoff by virus</keyword>
<keyword id="KW-1048">Host nucleus</keyword>
<keyword id="KW-0945">Host-virus interaction</keyword>
<keyword id="KW-1104">Inhibition of host RNA polymerase II by virus</keyword>
<keyword id="KW-0547">Nucleotide-binding</keyword>
<keyword id="KW-0548">Nucleotidyltransferase</keyword>
<keyword id="KW-0597">Phosphoprotein</keyword>
<keyword id="KW-0696">RNA-directed RNA polymerase</keyword>
<keyword id="KW-0808">Transferase</keyword>
<keyword id="KW-0693">Viral RNA replication</keyword>
<keyword id="KW-1195">Viral transcription</keyword>
<dbReference type="EC" id="2.7.7.48" evidence="1"/>
<dbReference type="EMBL" id="CY015113">
    <property type="protein sequence ID" value="ABI85152.1"/>
    <property type="molecule type" value="Other_RNA"/>
</dbReference>
<dbReference type="SMR" id="Q0A2D0"/>
<dbReference type="Proteomes" id="UP000105783">
    <property type="component" value="Genome"/>
</dbReference>
<dbReference type="GO" id="GO:0030430">
    <property type="term" value="C:host cell cytoplasm"/>
    <property type="evidence" value="ECO:0007669"/>
    <property type="project" value="UniProtKB-SubCell"/>
</dbReference>
<dbReference type="GO" id="GO:0042025">
    <property type="term" value="C:host cell nucleus"/>
    <property type="evidence" value="ECO:0007669"/>
    <property type="project" value="UniProtKB-SubCell"/>
</dbReference>
<dbReference type="GO" id="GO:0000166">
    <property type="term" value="F:nucleotide binding"/>
    <property type="evidence" value="ECO:0007669"/>
    <property type="project" value="UniProtKB-UniRule"/>
</dbReference>
<dbReference type="GO" id="GO:0003723">
    <property type="term" value="F:RNA binding"/>
    <property type="evidence" value="ECO:0007669"/>
    <property type="project" value="InterPro"/>
</dbReference>
<dbReference type="GO" id="GO:0003968">
    <property type="term" value="F:RNA-directed RNA polymerase activity"/>
    <property type="evidence" value="ECO:0007669"/>
    <property type="project" value="UniProtKB-UniRule"/>
</dbReference>
<dbReference type="GO" id="GO:0006351">
    <property type="term" value="P:DNA-templated transcription"/>
    <property type="evidence" value="ECO:0007669"/>
    <property type="project" value="UniProtKB-UniRule"/>
</dbReference>
<dbReference type="GO" id="GO:0039657">
    <property type="term" value="P:symbiont-mediated suppression of host gene expression"/>
    <property type="evidence" value="ECO:0007669"/>
    <property type="project" value="UniProtKB-KW"/>
</dbReference>
<dbReference type="GO" id="GO:0039523">
    <property type="term" value="P:symbiont-mediated suppression of host mRNA transcription via inhibition of RNA polymerase II activity"/>
    <property type="evidence" value="ECO:0007669"/>
    <property type="project" value="UniProtKB-UniRule"/>
</dbReference>
<dbReference type="GO" id="GO:0039694">
    <property type="term" value="P:viral RNA genome replication"/>
    <property type="evidence" value="ECO:0007669"/>
    <property type="project" value="UniProtKB-UniRule"/>
</dbReference>
<dbReference type="GO" id="GO:0019083">
    <property type="term" value="P:viral transcription"/>
    <property type="evidence" value="ECO:0007669"/>
    <property type="project" value="UniProtKB-KW"/>
</dbReference>
<dbReference type="Gene3D" id="6.10.140.720">
    <property type="match status" value="1"/>
</dbReference>
<dbReference type="HAMAP" id="MF_04065">
    <property type="entry name" value="INFV_RDRP"/>
    <property type="match status" value="1"/>
</dbReference>
<dbReference type="InterPro" id="IPR007099">
    <property type="entry name" value="RNA-dir_pol_NSvirus"/>
</dbReference>
<dbReference type="InterPro" id="IPR001407">
    <property type="entry name" value="RNA_pol_PB1_influenza"/>
</dbReference>
<dbReference type="Pfam" id="PF00602">
    <property type="entry name" value="Flu_PB1"/>
    <property type="match status" value="1"/>
</dbReference>
<dbReference type="PIRSF" id="PIRSF000827">
    <property type="entry name" value="RdRPol_OMV"/>
    <property type="match status" value="1"/>
</dbReference>
<dbReference type="PROSITE" id="PS50525">
    <property type="entry name" value="RDRP_SSRNA_NEG_SEG"/>
    <property type="match status" value="1"/>
</dbReference>
<proteinExistence type="inferred from homology"/>
<evidence type="ECO:0000255" key="1">
    <source>
        <dbReference type="HAMAP-Rule" id="MF_04065"/>
    </source>
</evidence>
<evidence type="ECO:0000256" key="2">
    <source>
        <dbReference type="SAM" id="MobiDB-lite"/>
    </source>
</evidence>